<evidence type="ECO:0000250" key="1">
    <source>
        <dbReference type="UniProtKB" id="P61254"/>
    </source>
</evidence>
<evidence type="ECO:0000256" key="2">
    <source>
        <dbReference type="SAM" id="MobiDB-lite"/>
    </source>
</evidence>
<evidence type="ECO:0000305" key="3"/>
<reference key="1">
    <citation type="submission" date="1994-06" db="EMBL/GenBank/DDBJ databases">
        <title>Partial nucleotide sequence of the ribosomal protein L26 from chicken.</title>
        <authorList>
            <person name="Wang H."/>
            <person name="Pinsonneault S."/>
            <person name="Meury L."/>
            <person name="Morais R."/>
        </authorList>
    </citation>
    <scope>NUCLEOTIDE SEQUENCE [MRNA]</scope>
    <source>
        <strain>White leghorn</strain>
        <tissue>Liver</tissue>
    </source>
</reference>
<keyword id="KW-0963">Cytoplasm</keyword>
<keyword id="KW-1185">Reference proteome</keyword>
<keyword id="KW-0687">Ribonucleoprotein</keyword>
<keyword id="KW-0689">Ribosomal protein</keyword>
<feature type="chain" id="PRO_0000130792" description="Large ribosomal subunit protein uL24">
    <location>
        <begin position="1" status="less than"/>
        <end position="128"/>
    </location>
</feature>
<feature type="region of interest" description="Disordered" evidence="2">
    <location>
        <begin position="105"/>
        <end position="128"/>
    </location>
</feature>
<feature type="non-terminal residue">
    <location>
        <position position="1"/>
    </location>
</feature>
<comment type="function">
    <text evidence="1">Component of the large ribosomal subunit. The ribosome is a large ribonucleoprotein complex responsible for the synthesis of proteins in the cell.</text>
</comment>
<comment type="subunit">
    <text evidence="1">Component of the large ribosomal subunit.</text>
</comment>
<comment type="subcellular location">
    <subcellularLocation>
        <location evidence="1">Cytoplasm</location>
    </subcellularLocation>
</comment>
<comment type="similarity">
    <text evidence="3">Belongs to the universal ribosomal protein uL24 family.</text>
</comment>
<name>RL26_CHICK</name>
<protein>
    <recommendedName>
        <fullName evidence="3">Large ribosomal subunit protein uL24</fullName>
    </recommendedName>
    <alternativeName>
        <fullName>60S ribosomal protein L26</fullName>
    </alternativeName>
</protein>
<accession>P47832</accession>
<dbReference type="EMBL" id="L34018">
    <property type="protein sequence ID" value="AAA48934.1"/>
    <property type="molecule type" value="mRNA"/>
</dbReference>
<dbReference type="SMR" id="P47832"/>
<dbReference type="FunCoup" id="P47832">
    <property type="interactions" value="1010"/>
</dbReference>
<dbReference type="STRING" id="9031.ENSGALP00000063815"/>
<dbReference type="PaxDb" id="9031-ENSGALP00000004515"/>
<dbReference type="VEuPathDB" id="HostDB:geneid_396400"/>
<dbReference type="eggNOG" id="KOG3401">
    <property type="taxonomic scope" value="Eukaryota"/>
</dbReference>
<dbReference type="HOGENOM" id="CLU_093240_0_0_1"/>
<dbReference type="InParanoid" id="P47832"/>
<dbReference type="PhylomeDB" id="P47832"/>
<dbReference type="Proteomes" id="UP000000539">
    <property type="component" value="Unassembled WGS sequence"/>
</dbReference>
<dbReference type="GO" id="GO:0022625">
    <property type="term" value="C:cytosolic large ribosomal subunit"/>
    <property type="evidence" value="ECO:0000318"/>
    <property type="project" value="GO_Central"/>
</dbReference>
<dbReference type="GO" id="GO:0003723">
    <property type="term" value="F:RNA binding"/>
    <property type="evidence" value="ECO:0000318"/>
    <property type="project" value="GO_Central"/>
</dbReference>
<dbReference type="GO" id="GO:0003735">
    <property type="term" value="F:structural constituent of ribosome"/>
    <property type="evidence" value="ECO:0000318"/>
    <property type="project" value="GO_Central"/>
</dbReference>
<dbReference type="GO" id="GO:0002181">
    <property type="term" value="P:cytoplasmic translation"/>
    <property type="evidence" value="ECO:0000318"/>
    <property type="project" value="GO_Central"/>
</dbReference>
<dbReference type="GO" id="GO:0042273">
    <property type="term" value="P:ribosomal large subunit biogenesis"/>
    <property type="evidence" value="ECO:0000318"/>
    <property type="project" value="GO_Central"/>
</dbReference>
<dbReference type="CDD" id="cd06089">
    <property type="entry name" value="KOW_RPL26"/>
    <property type="match status" value="1"/>
</dbReference>
<dbReference type="FunFam" id="2.30.30.30:FF:000009">
    <property type="entry name" value="60S ribosomal protein L26"/>
    <property type="match status" value="1"/>
</dbReference>
<dbReference type="Gene3D" id="2.30.30.30">
    <property type="match status" value="1"/>
</dbReference>
<dbReference type="InterPro" id="IPR005824">
    <property type="entry name" value="KOW"/>
</dbReference>
<dbReference type="InterPro" id="IPR014722">
    <property type="entry name" value="Rib_uL2_dom2"/>
</dbReference>
<dbReference type="InterPro" id="IPR005825">
    <property type="entry name" value="Ribosomal_uL24_CS"/>
</dbReference>
<dbReference type="InterPro" id="IPR005756">
    <property type="entry name" value="Ribosomal_uL24_euk/arc"/>
</dbReference>
<dbReference type="InterPro" id="IPR041988">
    <property type="entry name" value="Ribosomal_uL24_KOW"/>
</dbReference>
<dbReference type="InterPro" id="IPR008991">
    <property type="entry name" value="Translation_prot_SH3-like_sf"/>
</dbReference>
<dbReference type="NCBIfam" id="TIGR01080">
    <property type="entry name" value="rplX_A_E"/>
    <property type="match status" value="1"/>
</dbReference>
<dbReference type="PANTHER" id="PTHR11143">
    <property type="entry name" value="60S RIBOSOMAL PROTEIN L26 FAMILY MEMBER"/>
    <property type="match status" value="1"/>
</dbReference>
<dbReference type="Pfam" id="PF00467">
    <property type="entry name" value="KOW"/>
    <property type="match status" value="1"/>
</dbReference>
<dbReference type="Pfam" id="PF16906">
    <property type="entry name" value="Ribosomal_L26"/>
    <property type="match status" value="1"/>
</dbReference>
<dbReference type="SMART" id="SM00739">
    <property type="entry name" value="KOW"/>
    <property type="match status" value="1"/>
</dbReference>
<dbReference type="SUPFAM" id="SSF50104">
    <property type="entry name" value="Translation proteins SH3-like domain"/>
    <property type="match status" value="1"/>
</dbReference>
<dbReference type="PROSITE" id="PS01108">
    <property type="entry name" value="RIBOSOMAL_L24"/>
    <property type="match status" value="1"/>
</dbReference>
<proteinExistence type="evidence at transcript level"/>
<sequence length="128" mass="15165">HFNAPSHIRRKIMSSPLSKELRQKYNVRSMPIRKDDEVQVVRGHYKGQQIGKVVQVYRKKYVIYIERVQREKANGTTVHVGIHPSKVVITRLKLDKDRKKILERKAKSRQVGKEKGKYKEETIEKMQE</sequence>
<gene>
    <name type="primary">RPL26</name>
</gene>
<organism>
    <name type="scientific">Gallus gallus</name>
    <name type="common">Chicken</name>
    <dbReference type="NCBI Taxonomy" id="9031"/>
    <lineage>
        <taxon>Eukaryota</taxon>
        <taxon>Metazoa</taxon>
        <taxon>Chordata</taxon>
        <taxon>Craniata</taxon>
        <taxon>Vertebrata</taxon>
        <taxon>Euteleostomi</taxon>
        <taxon>Archelosauria</taxon>
        <taxon>Archosauria</taxon>
        <taxon>Dinosauria</taxon>
        <taxon>Saurischia</taxon>
        <taxon>Theropoda</taxon>
        <taxon>Coelurosauria</taxon>
        <taxon>Aves</taxon>
        <taxon>Neognathae</taxon>
        <taxon>Galloanserae</taxon>
        <taxon>Galliformes</taxon>
        <taxon>Phasianidae</taxon>
        <taxon>Phasianinae</taxon>
        <taxon>Gallus</taxon>
    </lineage>
</organism>